<dbReference type="EC" id="2.5.1.39" evidence="1"/>
<dbReference type="EMBL" id="CP000304">
    <property type="protein sequence ID" value="ABP78134.1"/>
    <property type="molecule type" value="Genomic_DNA"/>
</dbReference>
<dbReference type="RefSeq" id="WP_011911664.1">
    <property type="nucleotide sequence ID" value="NC_009434.1"/>
</dbReference>
<dbReference type="SMR" id="A4VGN3"/>
<dbReference type="KEGG" id="psa:PST_0428"/>
<dbReference type="eggNOG" id="COG0382">
    <property type="taxonomic scope" value="Bacteria"/>
</dbReference>
<dbReference type="HOGENOM" id="CLU_034879_1_0_6"/>
<dbReference type="UniPathway" id="UPA00232"/>
<dbReference type="Proteomes" id="UP000000233">
    <property type="component" value="Chromosome"/>
</dbReference>
<dbReference type="GO" id="GO:0005886">
    <property type="term" value="C:plasma membrane"/>
    <property type="evidence" value="ECO:0007669"/>
    <property type="project" value="UniProtKB-SubCell"/>
</dbReference>
<dbReference type="GO" id="GO:0008412">
    <property type="term" value="F:4-hydroxybenzoate polyprenyltransferase activity"/>
    <property type="evidence" value="ECO:0007669"/>
    <property type="project" value="UniProtKB-UniRule"/>
</dbReference>
<dbReference type="GO" id="GO:0006744">
    <property type="term" value="P:ubiquinone biosynthetic process"/>
    <property type="evidence" value="ECO:0007669"/>
    <property type="project" value="UniProtKB-UniRule"/>
</dbReference>
<dbReference type="CDD" id="cd13959">
    <property type="entry name" value="PT_UbiA_COQ2"/>
    <property type="match status" value="1"/>
</dbReference>
<dbReference type="FunFam" id="1.10.357.140:FF:000002">
    <property type="entry name" value="4-hydroxybenzoate octaprenyltransferase"/>
    <property type="match status" value="1"/>
</dbReference>
<dbReference type="FunFam" id="1.20.120.1780:FF:000001">
    <property type="entry name" value="4-hydroxybenzoate octaprenyltransferase"/>
    <property type="match status" value="1"/>
</dbReference>
<dbReference type="Gene3D" id="1.10.357.140">
    <property type="entry name" value="UbiA prenyltransferase"/>
    <property type="match status" value="1"/>
</dbReference>
<dbReference type="Gene3D" id="1.20.120.1780">
    <property type="entry name" value="UbiA prenyltransferase"/>
    <property type="match status" value="1"/>
</dbReference>
<dbReference type="HAMAP" id="MF_01635">
    <property type="entry name" value="UbiA"/>
    <property type="match status" value="1"/>
</dbReference>
<dbReference type="InterPro" id="IPR006370">
    <property type="entry name" value="HB_polyprenyltransferase-like"/>
</dbReference>
<dbReference type="InterPro" id="IPR039653">
    <property type="entry name" value="Prenyltransferase"/>
</dbReference>
<dbReference type="InterPro" id="IPR000537">
    <property type="entry name" value="UbiA_prenyltransferase"/>
</dbReference>
<dbReference type="InterPro" id="IPR030470">
    <property type="entry name" value="UbiA_prenylTrfase_CS"/>
</dbReference>
<dbReference type="InterPro" id="IPR044878">
    <property type="entry name" value="UbiA_sf"/>
</dbReference>
<dbReference type="NCBIfam" id="TIGR01474">
    <property type="entry name" value="ubiA_proteo"/>
    <property type="match status" value="1"/>
</dbReference>
<dbReference type="PANTHER" id="PTHR11048:SF28">
    <property type="entry name" value="4-HYDROXYBENZOATE POLYPRENYLTRANSFERASE, MITOCHONDRIAL"/>
    <property type="match status" value="1"/>
</dbReference>
<dbReference type="PANTHER" id="PTHR11048">
    <property type="entry name" value="PRENYLTRANSFERASES"/>
    <property type="match status" value="1"/>
</dbReference>
<dbReference type="Pfam" id="PF01040">
    <property type="entry name" value="UbiA"/>
    <property type="match status" value="1"/>
</dbReference>
<dbReference type="PROSITE" id="PS00943">
    <property type="entry name" value="UBIA"/>
    <property type="match status" value="1"/>
</dbReference>
<reference key="1">
    <citation type="journal article" date="2008" name="Proc. Natl. Acad. Sci. U.S.A.">
        <title>Nitrogen fixation island and rhizosphere competence traits in the genome of root-associated Pseudomonas stutzeri A1501.</title>
        <authorList>
            <person name="Yan Y."/>
            <person name="Yang J."/>
            <person name="Dou Y."/>
            <person name="Chen M."/>
            <person name="Ping S."/>
            <person name="Peng J."/>
            <person name="Lu W."/>
            <person name="Zhang W."/>
            <person name="Yao Z."/>
            <person name="Li H."/>
            <person name="Liu W."/>
            <person name="He S."/>
            <person name="Geng L."/>
            <person name="Zhang X."/>
            <person name="Yang F."/>
            <person name="Yu H."/>
            <person name="Zhan Y."/>
            <person name="Li D."/>
            <person name="Lin Z."/>
            <person name="Wang Y."/>
            <person name="Elmerich C."/>
            <person name="Lin M."/>
            <person name="Jin Q."/>
        </authorList>
    </citation>
    <scope>NUCLEOTIDE SEQUENCE [LARGE SCALE GENOMIC DNA]</scope>
    <source>
        <strain>A1501</strain>
    </source>
</reference>
<sequence length="297" mass="33180">MYLKLLQSCNRLHPRAWDFIQLMRLDKPIGTYLLLWPTLWALWIAAEGVPSAKNLFIFITGVILMRAAGCVVNDFADRNFDGHVQRTQARPMAAGRVSSREAWTLFAVLVGLSFGLVLLTNATTVYLSFGALALAACYPFMKRYTFYPQVVLGAAFSWGMPMAFTAETGSLPPEAWLLFIANLLWTVAYDTYYAMADRDDDLKIGIKSTAILFGEADRVIIVTLQGLALFCLLLAGVRFELGQWFHLGLVIAAGCFAWEFWKTQSRKPQVCFKAFLHNHWAGLAILAGIVLDYATKA</sequence>
<organism>
    <name type="scientific">Stutzerimonas stutzeri (strain A1501)</name>
    <name type="common">Pseudomonas stutzeri</name>
    <dbReference type="NCBI Taxonomy" id="379731"/>
    <lineage>
        <taxon>Bacteria</taxon>
        <taxon>Pseudomonadati</taxon>
        <taxon>Pseudomonadota</taxon>
        <taxon>Gammaproteobacteria</taxon>
        <taxon>Pseudomonadales</taxon>
        <taxon>Pseudomonadaceae</taxon>
        <taxon>Stutzerimonas</taxon>
    </lineage>
</organism>
<keyword id="KW-0997">Cell inner membrane</keyword>
<keyword id="KW-1003">Cell membrane</keyword>
<keyword id="KW-0460">Magnesium</keyword>
<keyword id="KW-0472">Membrane</keyword>
<keyword id="KW-1185">Reference proteome</keyword>
<keyword id="KW-0808">Transferase</keyword>
<keyword id="KW-0812">Transmembrane</keyword>
<keyword id="KW-1133">Transmembrane helix</keyword>
<keyword id="KW-0831">Ubiquinone biosynthesis</keyword>
<evidence type="ECO:0000255" key="1">
    <source>
        <dbReference type="HAMAP-Rule" id="MF_01635"/>
    </source>
</evidence>
<gene>
    <name evidence="1" type="primary">ubiA</name>
    <name type="ordered locus">PST_0428</name>
</gene>
<accession>A4VGN3</accession>
<feature type="chain" id="PRO_1000069832" description="4-hydroxybenzoate octaprenyltransferase">
    <location>
        <begin position="1"/>
        <end position="297"/>
    </location>
</feature>
<feature type="transmembrane region" description="Helical" evidence="1">
    <location>
        <begin position="29"/>
        <end position="49"/>
    </location>
</feature>
<feature type="transmembrane region" description="Helical" evidence="1">
    <location>
        <begin position="55"/>
        <end position="75"/>
    </location>
</feature>
<feature type="transmembrane region" description="Helical" evidence="1">
    <location>
        <begin position="102"/>
        <end position="122"/>
    </location>
</feature>
<feature type="transmembrane region" description="Helical" evidence="1">
    <location>
        <begin position="124"/>
        <end position="141"/>
    </location>
</feature>
<feature type="transmembrane region" description="Helical" evidence="1">
    <location>
        <begin position="146"/>
        <end position="166"/>
    </location>
</feature>
<feature type="transmembrane region" description="Helical" evidence="1">
    <location>
        <begin position="169"/>
        <end position="189"/>
    </location>
</feature>
<feature type="transmembrane region" description="Helical" evidence="1">
    <location>
        <begin position="219"/>
        <end position="239"/>
    </location>
</feature>
<feature type="transmembrane region" description="Helical" evidence="1">
    <location>
        <begin position="241"/>
        <end position="261"/>
    </location>
</feature>
<feature type="transmembrane region" description="Helical" evidence="1">
    <location>
        <begin position="270"/>
        <end position="290"/>
    </location>
</feature>
<proteinExistence type="inferred from homology"/>
<name>UBIA_STUS1</name>
<protein>
    <recommendedName>
        <fullName evidence="1">4-hydroxybenzoate octaprenyltransferase</fullName>
        <ecNumber evidence="1">2.5.1.39</ecNumber>
    </recommendedName>
    <alternativeName>
        <fullName evidence="1">4-HB polyprenyltransferase</fullName>
    </alternativeName>
</protein>
<comment type="function">
    <text evidence="1">Catalyzes the prenylation of para-hydroxybenzoate (PHB) with an all-trans polyprenyl group. Mediates the second step in the final reaction sequence of ubiquinone-8 (UQ-8) biosynthesis, which is the condensation of the polyisoprenoid side chain with PHB, generating the first membrane-bound Q intermediate 3-octaprenyl-4-hydroxybenzoate.</text>
</comment>
<comment type="catalytic activity">
    <reaction evidence="1">
        <text>all-trans-octaprenyl diphosphate + 4-hydroxybenzoate = 4-hydroxy-3-(all-trans-octaprenyl)benzoate + diphosphate</text>
        <dbReference type="Rhea" id="RHEA:27782"/>
        <dbReference type="ChEBI" id="CHEBI:1617"/>
        <dbReference type="ChEBI" id="CHEBI:17879"/>
        <dbReference type="ChEBI" id="CHEBI:33019"/>
        <dbReference type="ChEBI" id="CHEBI:57711"/>
        <dbReference type="EC" id="2.5.1.39"/>
    </reaction>
</comment>
<comment type="cofactor">
    <cofactor evidence="1">
        <name>Mg(2+)</name>
        <dbReference type="ChEBI" id="CHEBI:18420"/>
    </cofactor>
</comment>
<comment type="pathway">
    <text evidence="1">Cofactor biosynthesis; ubiquinone biosynthesis.</text>
</comment>
<comment type="subcellular location">
    <subcellularLocation>
        <location evidence="1">Cell inner membrane</location>
        <topology evidence="1">Multi-pass membrane protein</topology>
    </subcellularLocation>
</comment>
<comment type="similarity">
    <text evidence="1">Belongs to the UbiA prenyltransferase family.</text>
</comment>